<proteinExistence type="inferred from homology"/>
<organism>
    <name type="scientific">Campylobacter concisus (strain 13826)</name>
    <dbReference type="NCBI Taxonomy" id="360104"/>
    <lineage>
        <taxon>Bacteria</taxon>
        <taxon>Pseudomonadati</taxon>
        <taxon>Campylobacterota</taxon>
        <taxon>Epsilonproteobacteria</taxon>
        <taxon>Campylobacterales</taxon>
        <taxon>Campylobacteraceae</taxon>
        <taxon>Campylobacter</taxon>
    </lineage>
</organism>
<sequence length="131" mass="14901">MATRHQVRQAIVSLLYSNEINPVTAEFEDEFLEEKKIRNERKNEAQQTFKEVLANKEKLDEILKPHLKDGDFSKVGATELAILRLGLYEMKFSQTDKAVIINEAIELAKELGSDQAPKFINGVLDKIKGDL</sequence>
<keyword id="KW-0694">RNA-binding</keyword>
<keyword id="KW-0804">Transcription</keyword>
<keyword id="KW-0889">Transcription antitermination</keyword>
<keyword id="KW-0805">Transcription regulation</keyword>
<accession>A7ZBS7</accession>
<name>NUSB_CAMC1</name>
<feature type="chain" id="PRO_1000023719" description="Transcription antitermination protein NusB">
    <location>
        <begin position="1"/>
        <end position="131"/>
    </location>
</feature>
<evidence type="ECO:0000255" key="1">
    <source>
        <dbReference type="HAMAP-Rule" id="MF_00073"/>
    </source>
</evidence>
<dbReference type="EMBL" id="CP000792">
    <property type="protein sequence ID" value="EAT98892.1"/>
    <property type="molecule type" value="Genomic_DNA"/>
</dbReference>
<dbReference type="RefSeq" id="WP_012001236.1">
    <property type="nucleotide sequence ID" value="NC_009802.2"/>
</dbReference>
<dbReference type="SMR" id="A7ZBS7"/>
<dbReference type="STRING" id="360104.CCC13826_0784"/>
<dbReference type="KEGG" id="cco:CCC13826_0784"/>
<dbReference type="eggNOG" id="COG0781">
    <property type="taxonomic scope" value="Bacteria"/>
</dbReference>
<dbReference type="HOGENOM" id="CLU_087843_3_3_7"/>
<dbReference type="OrthoDB" id="9797817at2"/>
<dbReference type="Proteomes" id="UP000001121">
    <property type="component" value="Chromosome"/>
</dbReference>
<dbReference type="GO" id="GO:0005829">
    <property type="term" value="C:cytosol"/>
    <property type="evidence" value="ECO:0007669"/>
    <property type="project" value="TreeGrafter"/>
</dbReference>
<dbReference type="GO" id="GO:0003723">
    <property type="term" value="F:RNA binding"/>
    <property type="evidence" value="ECO:0007669"/>
    <property type="project" value="UniProtKB-UniRule"/>
</dbReference>
<dbReference type="GO" id="GO:0006353">
    <property type="term" value="P:DNA-templated transcription termination"/>
    <property type="evidence" value="ECO:0007669"/>
    <property type="project" value="UniProtKB-UniRule"/>
</dbReference>
<dbReference type="GO" id="GO:0031564">
    <property type="term" value="P:transcription antitermination"/>
    <property type="evidence" value="ECO:0007669"/>
    <property type="project" value="UniProtKB-KW"/>
</dbReference>
<dbReference type="Gene3D" id="1.10.940.10">
    <property type="entry name" value="NusB-like"/>
    <property type="match status" value="1"/>
</dbReference>
<dbReference type="HAMAP" id="MF_00073">
    <property type="entry name" value="NusB"/>
    <property type="match status" value="1"/>
</dbReference>
<dbReference type="InterPro" id="IPR035926">
    <property type="entry name" value="NusB-like_sf"/>
</dbReference>
<dbReference type="InterPro" id="IPR011605">
    <property type="entry name" value="NusB_fam"/>
</dbReference>
<dbReference type="InterPro" id="IPR006027">
    <property type="entry name" value="NusB_RsmB_TIM44"/>
</dbReference>
<dbReference type="NCBIfam" id="TIGR01951">
    <property type="entry name" value="nusB"/>
    <property type="match status" value="1"/>
</dbReference>
<dbReference type="PANTHER" id="PTHR11078:SF3">
    <property type="entry name" value="ANTITERMINATION NUSB DOMAIN-CONTAINING PROTEIN"/>
    <property type="match status" value="1"/>
</dbReference>
<dbReference type="PANTHER" id="PTHR11078">
    <property type="entry name" value="N UTILIZATION SUBSTANCE PROTEIN B-RELATED"/>
    <property type="match status" value="1"/>
</dbReference>
<dbReference type="Pfam" id="PF01029">
    <property type="entry name" value="NusB"/>
    <property type="match status" value="1"/>
</dbReference>
<dbReference type="SUPFAM" id="SSF48013">
    <property type="entry name" value="NusB-like"/>
    <property type="match status" value="1"/>
</dbReference>
<reference key="1">
    <citation type="submission" date="2007-10" db="EMBL/GenBank/DDBJ databases">
        <title>Genome sequence of Campylobacter concisus 13826 isolated from human feces.</title>
        <authorList>
            <person name="Fouts D.E."/>
            <person name="Mongodin E.F."/>
            <person name="Puiu D."/>
            <person name="Sebastian Y."/>
            <person name="Miller W.G."/>
            <person name="Mandrell R.E."/>
            <person name="On S."/>
            <person name="Nelson K.E."/>
        </authorList>
    </citation>
    <scope>NUCLEOTIDE SEQUENCE [LARGE SCALE GENOMIC DNA]</scope>
    <source>
        <strain>13826</strain>
    </source>
</reference>
<gene>
    <name evidence="1" type="primary">nusB</name>
    <name type="ordered locus">Ccon26_03250</name>
    <name type="ORF">CCC13826_0784</name>
</gene>
<protein>
    <recommendedName>
        <fullName evidence="1">Transcription antitermination protein NusB</fullName>
    </recommendedName>
    <alternativeName>
        <fullName evidence="1">Antitermination factor NusB</fullName>
    </alternativeName>
</protein>
<comment type="function">
    <text evidence="1">Involved in transcription antitermination. Required for transcription of ribosomal RNA (rRNA) genes. Binds specifically to the boxA antiterminator sequence of the ribosomal RNA (rrn) operons.</text>
</comment>
<comment type="similarity">
    <text evidence="1">Belongs to the NusB family.</text>
</comment>